<sequence>MHKVQLIIKLLLQLGIIIVITYIGTEIQKIFHLPLAGSIVGLFLFYLLLQFKIVPLTWVEDGANFLLKTMVFFFIPSVVGIMDVASEITLNYILFFAVIIIGTCIVALSSGYIAEKMSVKHKHRKGVDAYE</sequence>
<organism>
    <name type="scientific">Staphylococcus aureus (strain Newman)</name>
    <dbReference type="NCBI Taxonomy" id="426430"/>
    <lineage>
        <taxon>Bacteria</taxon>
        <taxon>Bacillati</taxon>
        <taxon>Bacillota</taxon>
        <taxon>Bacilli</taxon>
        <taxon>Bacillales</taxon>
        <taxon>Staphylococcaceae</taxon>
        <taxon>Staphylococcus</taxon>
    </lineage>
</organism>
<comment type="function">
    <text evidence="1">Increases the activity of extracellular murein hydrolases possibly by mediating their export via hole formation. Inhibited by the antiholin-like proteins LrgAB. In an unstressed cell, the LrgAB products probably inhibit the function of the CidAB proteins. When a cell is stressed by the addition of antibiotics or by other factors in the environment, the CidAB proteins possibly oligomerize within the bacterial cell membrane, creating lesions that disrupt the proton motive force, which in turn results in loss of cell viability. These lesions are also hypothesized to regulate the subsequent cell lysis by either allowing the murein hydrolases access to the cell wall substrate and/or regulating their activity by a possible change in the cell wall pH that results from loss of membrane potential.</text>
</comment>
<comment type="subcellular location">
    <subcellularLocation>
        <location evidence="1">Cell membrane</location>
        <topology evidence="1">Multi-pass membrane protein</topology>
    </subcellularLocation>
</comment>
<comment type="similarity">
    <text evidence="1">Belongs to the CidA/LrgA family. CidA subfamily.</text>
</comment>
<accession>A6QK30</accession>
<feature type="chain" id="PRO_1000073052" description="Holin-like protein CidA">
    <location>
        <begin position="1"/>
        <end position="131"/>
    </location>
</feature>
<feature type="transmembrane region" description="Helical" evidence="1">
    <location>
        <begin position="4"/>
        <end position="24"/>
    </location>
</feature>
<feature type="transmembrane region" description="Helical" evidence="1">
    <location>
        <begin position="30"/>
        <end position="50"/>
    </location>
</feature>
<feature type="transmembrane region" description="Helical" evidence="1">
    <location>
        <begin position="65"/>
        <end position="85"/>
    </location>
</feature>
<feature type="transmembrane region" description="Helical" evidence="1">
    <location>
        <begin position="88"/>
        <end position="108"/>
    </location>
</feature>
<keyword id="KW-1003">Cell membrane</keyword>
<keyword id="KW-0204">Cytolysis</keyword>
<keyword id="KW-0472">Membrane</keyword>
<keyword id="KW-0812">Transmembrane</keyword>
<keyword id="KW-1133">Transmembrane helix</keyword>
<protein>
    <recommendedName>
        <fullName evidence="1">Holin-like protein CidA</fullName>
    </recommendedName>
</protein>
<evidence type="ECO:0000255" key="1">
    <source>
        <dbReference type="HAMAP-Rule" id="MF_01143"/>
    </source>
</evidence>
<proteinExistence type="inferred from homology"/>
<name>CIDA_STAAE</name>
<dbReference type="EMBL" id="AP009351">
    <property type="protein sequence ID" value="BAF68712.1"/>
    <property type="molecule type" value="Genomic_DNA"/>
</dbReference>
<dbReference type="RefSeq" id="WP_000549734.1">
    <property type="nucleotide sequence ID" value="NZ_JBBIAE010000012.1"/>
</dbReference>
<dbReference type="SMR" id="A6QK30"/>
<dbReference type="KEGG" id="sae:NWMN_2440"/>
<dbReference type="HOGENOM" id="CLU_113736_2_1_9"/>
<dbReference type="Proteomes" id="UP000006386">
    <property type="component" value="Chromosome"/>
</dbReference>
<dbReference type="GO" id="GO:0005886">
    <property type="term" value="C:plasma membrane"/>
    <property type="evidence" value="ECO:0007669"/>
    <property type="project" value="UniProtKB-SubCell"/>
</dbReference>
<dbReference type="GO" id="GO:0019835">
    <property type="term" value="P:cytolysis"/>
    <property type="evidence" value="ECO:0007669"/>
    <property type="project" value="UniProtKB-UniRule"/>
</dbReference>
<dbReference type="GO" id="GO:0031640">
    <property type="term" value="P:killing of cells of another organism"/>
    <property type="evidence" value="ECO:0007669"/>
    <property type="project" value="UniProtKB-KW"/>
</dbReference>
<dbReference type="GO" id="GO:0012501">
    <property type="term" value="P:programmed cell death"/>
    <property type="evidence" value="ECO:0007669"/>
    <property type="project" value="UniProtKB-UniRule"/>
</dbReference>
<dbReference type="HAMAP" id="MF_01143">
    <property type="entry name" value="CidA"/>
    <property type="match status" value="1"/>
</dbReference>
<dbReference type="InterPro" id="IPR023760">
    <property type="entry name" value="Holin-like_CidA"/>
</dbReference>
<dbReference type="InterPro" id="IPR005538">
    <property type="entry name" value="LrgA/CidA"/>
</dbReference>
<dbReference type="PANTHER" id="PTHR33931:SF2">
    <property type="entry name" value="HOLIN-LIKE PROTEIN CIDA"/>
    <property type="match status" value="1"/>
</dbReference>
<dbReference type="PANTHER" id="PTHR33931">
    <property type="entry name" value="HOLIN-LIKE PROTEIN CIDA-RELATED"/>
    <property type="match status" value="1"/>
</dbReference>
<dbReference type="Pfam" id="PF03788">
    <property type="entry name" value="LrgA"/>
    <property type="match status" value="1"/>
</dbReference>
<gene>
    <name evidence="1" type="primary">cidA</name>
    <name type="ordered locus">NWMN_2440</name>
</gene>
<reference key="1">
    <citation type="journal article" date="2008" name="J. Bacteriol.">
        <title>Genome sequence of Staphylococcus aureus strain Newman and comparative analysis of staphylococcal genomes: polymorphism and evolution of two major pathogenicity islands.</title>
        <authorList>
            <person name="Baba T."/>
            <person name="Bae T."/>
            <person name="Schneewind O."/>
            <person name="Takeuchi F."/>
            <person name="Hiramatsu K."/>
        </authorList>
    </citation>
    <scope>NUCLEOTIDE SEQUENCE [LARGE SCALE GENOMIC DNA]</scope>
    <source>
        <strain>Newman</strain>
    </source>
</reference>